<keyword id="KW-0150">Chloroplast</keyword>
<keyword id="KW-0472">Membrane</keyword>
<keyword id="KW-0934">Plastid</keyword>
<keyword id="KW-0670">Pyruvate</keyword>
<keyword id="KW-1185">Reference proteome</keyword>
<keyword id="KW-0762">Sugar transport</keyword>
<keyword id="KW-0809">Transit peptide</keyword>
<keyword id="KW-0812">Transmembrane</keyword>
<keyword id="KW-1133">Transmembrane helix</keyword>
<keyword id="KW-0813">Transport</keyword>
<sequence length="408" mass="43594">MQSAAAVGLLRPCGATTAAAPLQLRNPSPRGFGVGVGQPLLPPRGLRLSAVAPRAGISARRIGLVPASPEQEDERRRGARDVAVAATAAAAGEAGAEEGGGLAKTLQLGALFGLWYLFNIYFNIYNKQVLKVFPYPINITNVQFAVGTVIALFMWITGILKRPKISGAQLAAILPLAMVHTMGNLFTNMSLGKVAVSFTHTIKAMEPFFSVLLSALFLGEMPTPFVVLSLVPIVGGVALASLTEASFNWAGFWSAMASNVTFQSRNVLSKKLMVKKEESLDNITLFSIITVMSFFLLAPVTLLTEGVKVTPTVLQSAGLNLKQIYTRSLIAAFCFHAYQQVSYMILARVSPVTHSVGNCVKRVVVIVTSVLFFRTPVSPINSLGTGVALAGVFLYSQLKRLKPKPKTA</sequence>
<proteinExistence type="evidence at transcript level"/>
<name>PPT1_ORYSJ</name>
<organism>
    <name type="scientific">Oryza sativa subsp. japonica</name>
    <name type="common">Rice</name>
    <dbReference type="NCBI Taxonomy" id="39947"/>
    <lineage>
        <taxon>Eukaryota</taxon>
        <taxon>Viridiplantae</taxon>
        <taxon>Streptophyta</taxon>
        <taxon>Embryophyta</taxon>
        <taxon>Tracheophyta</taxon>
        <taxon>Spermatophyta</taxon>
        <taxon>Magnoliopsida</taxon>
        <taxon>Liliopsida</taxon>
        <taxon>Poales</taxon>
        <taxon>Poaceae</taxon>
        <taxon>BOP clade</taxon>
        <taxon>Oryzoideae</taxon>
        <taxon>Oryzeae</taxon>
        <taxon>Oryzinae</taxon>
        <taxon>Oryza</taxon>
        <taxon>Oryza sativa</taxon>
    </lineage>
</organism>
<reference key="1">
    <citation type="submission" date="2001-04" db="EMBL/GenBank/DDBJ databases">
        <title>Rice phosphoenolpyruvate/phosphate translocator mRNA.</title>
        <authorList>
            <person name="Wu P."/>
            <person name="Jiang H.-W."/>
            <person name="Yi K.-K."/>
            <person name="Dian W.-M."/>
        </authorList>
    </citation>
    <scope>NUCLEOTIDE SEQUENCE [MRNA]</scope>
</reference>
<reference key="2">
    <citation type="journal article" date="2005" name="Nature">
        <title>The map-based sequence of the rice genome.</title>
        <authorList>
            <consortium name="International rice genome sequencing project (IRGSP)"/>
        </authorList>
    </citation>
    <scope>NUCLEOTIDE SEQUENCE [LARGE SCALE GENOMIC DNA]</scope>
    <source>
        <strain>cv. Nipponbare</strain>
    </source>
</reference>
<reference key="3">
    <citation type="journal article" date="2008" name="Nucleic Acids Res.">
        <title>The rice annotation project database (RAP-DB): 2008 update.</title>
        <authorList>
            <consortium name="The rice annotation project (RAP)"/>
        </authorList>
    </citation>
    <scope>GENOME REANNOTATION</scope>
    <source>
        <strain>cv. Nipponbare</strain>
    </source>
</reference>
<reference key="4">
    <citation type="journal article" date="2013" name="Rice">
        <title>Improvement of the Oryza sativa Nipponbare reference genome using next generation sequence and optical map data.</title>
        <authorList>
            <person name="Kawahara Y."/>
            <person name="de la Bastide M."/>
            <person name="Hamilton J.P."/>
            <person name="Kanamori H."/>
            <person name="McCombie W.R."/>
            <person name="Ouyang S."/>
            <person name="Schwartz D.C."/>
            <person name="Tanaka T."/>
            <person name="Wu J."/>
            <person name="Zhou S."/>
            <person name="Childs K.L."/>
            <person name="Davidson R.M."/>
            <person name="Lin H."/>
            <person name="Quesada-Ocampo L."/>
            <person name="Vaillancourt B."/>
            <person name="Sakai H."/>
            <person name="Lee S.S."/>
            <person name="Kim J."/>
            <person name="Numa H."/>
            <person name="Itoh T."/>
            <person name="Buell C.R."/>
            <person name="Matsumoto T."/>
        </authorList>
    </citation>
    <scope>GENOME REANNOTATION</scope>
    <source>
        <strain>cv. Nipponbare</strain>
    </source>
</reference>
<reference key="5">
    <citation type="journal article" date="2005" name="PLoS Biol.">
        <title>The genomes of Oryza sativa: a history of duplications.</title>
        <authorList>
            <person name="Yu J."/>
            <person name="Wang J."/>
            <person name="Lin W."/>
            <person name="Li S."/>
            <person name="Li H."/>
            <person name="Zhou J."/>
            <person name="Ni P."/>
            <person name="Dong W."/>
            <person name="Hu S."/>
            <person name="Zeng C."/>
            <person name="Zhang J."/>
            <person name="Zhang Y."/>
            <person name="Li R."/>
            <person name="Xu Z."/>
            <person name="Li S."/>
            <person name="Li X."/>
            <person name="Zheng H."/>
            <person name="Cong L."/>
            <person name="Lin L."/>
            <person name="Yin J."/>
            <person name="Geng J."/>
            <person name="Li G."/>
            <person name="Shi J."/>
            <person name="Liu J."/>
            <person name="Lv H."/>
            <person name="Li J."/>
            <person name="Wang J."/>
            <person name="Deng Y."/>
            <person name="Ran L."/>
            <person name="Shi X."/>
            <person name="Wang X."/>
            <person name="Wu Q."/>
            <person name="Li C."/>
            <person name="Ren X."/>
            <person name="Wang J."/>
            <person name="Wang X."/>
            <person name="Li D."/>
            <person name="Liu D."/>
            <person name="Zhang X."/>
            <person name="Ji Z."/>
            <person name="Zhao W."/>
            <person name="Sun Y."/>
            <person name="Zhang Z."/>
            <person name="Bao J."/>
            <person name="Han Y."/>
            <person name="Dong L."/>
            <person name="Ji J."/>
            <person name="Chen P."/>
            <person name="Wu S."/>
            <person name="Liu J."/>
            <person name="Xiao Y."/>
            <person name="Bu D."/>
            <person name="Tan J."/>
            <person name="Yang L."/>
            <person name="Ye C."/>
            <person name="Zhang J."/>
            <person name="Xu J."/>
            <person name="Zhou Y."/>
            <person name="Yu Y."/>
            <person name="Zhang B."/>
            <person name="Zhuang S."/>
            <person name="Wei H."/>
            <person name="Liu B."/>
            <person name="Lei M."/>
            <person name="Yu H."/>
            <person name="Li Y."/>
            <person name="Xu H."/>
            <person name="Wei S."/>
            <person name="He X."/>
            <person name="Fang L."/>
            <person name="Zhang Z."/>
            <person name="Zhang Y."/>
            <person name="Huang X."/>
            <person name="Su Z."/>
            <person name="Tong W."/>
            <person name="Li J."/>
            <person name="Tong Z."/>
            <person name="Li S."/>
            <person name="Ye J."/>
            <person name="Wang L."/>
            <person name="Fang L."/>
            <person name="Lei T."/>
            <person name="Chen C.-S."/>
            <person name="Chen H.-C."/>
            <person name="Xu Z."/>
            <person name="Li H."/>
            <person name="Huang H."/>
            <person name="Zhang F."/>
            <person name="Xu H."/>
            <person name="Li N."/>
            <person name="Zhao C."/>
            <person name="Li S."/>
            <person name="Dong L."/>
            <person name="Huang Y."/>
            <person name="Li L."/>
            <person name="Xi Y."/>
            <person name="Qi Q."/>
            <person name="Li W."/>
            <person name="Zhang B."/>
            <person name="Hu W."/>
            <person name="Zhang Y."/>
            <person name="Tian X."/>
            <person name="Jiao Y."/>
            <person name="Liang X."/>
            <person name="Jin J."/>
            <person name="Gao L."/>
            <person name="Zheng W."/>
            <person name="Hao B."/>
            <person name="Liu S.-M."/>
            <person name="Wang W."/>
            <person name="Yuan L."/>
            <person name="Cao M."/>
            <person name="McDermott J."/>
            <person name="Samudrala R."/>
            <person name="Wang J."/>
            <person name="Wong G.K.-S."/>
            <person name="Yang H."/>
        </authorList>
    </citation>
    <scope>NUCLEOTIDE SEQUENCE [LARGE SCALE GENOMIC DNA]</scope>
    <source>
        <strain>cv. Nipponbare</strain>
    </source>
</reference>
<reference key="6">
    <citation type="journal article" date="2003" name="Science">
        <title>Collection, mapping, and annotation of over 28,000 cDNA clones from japonica rice.</title>
        <authorList>
            <consortium name="The rice full-length cDNA consortium"/>
        </authorList>
    </citation>
    <scope>NUCLEOTIDE SEQUENCE [LARGE SCALE MRNA]</scope>
    <source>
        <strain>cv. Nipponbare</strain>
    </source>
</reference>
<reference key="7">
    <citation type="journal article" date="2007" name="Plant Cell Physiol.">
        <title>A cell-free translation and proteoliposome reconstitution system for functional analysis of plant solute transporters.</title>
        <authorList>
            <person name="Nozawa A."/>
            <person name="Nanamiya H."/>
            <person name="Miyata T."/>
            <person name="Linka N."/>
            <person name="Endo Y."/>
            <person name="Weber A.P."/>
            <person name="Tozawa Y."/>
        </authorList>
    </citation>
    <scope>FUNCTION</scope>
</reference>
<evidence type="ECO:0000255" key="1"/>
<evidence type="ECO:0000269" key="2">
    <source>
    </source>
</evidence>
<evidence type="ECO:0000305" key="3"/>
<feature type="transit peptide" description="Chloroplast" evidence="1">
    <location>
        <begin position="1"/>
        <end position="66"/>
    </location>
</feature>
<feature type="chain" id="PRO_0000406101" description="Phosphoenolpyruvate/phosphate translocator 1, chloroplastic">
    <location>
        <begin position="67"/>
        <end position="408"/>
    </location>
</feature>
<feature type="transmembrane region" description="Helical" evidence="1">
    <location>
        <begin position="105"/>
        <end position="125"/>
    </location>
</feature>
<feature type="transmembrane region" description="Helical" evidence="1">
    <location>
        <begin position="139"/>
        <end position="159"/>
    </location>
</feature>
<feature type="transmembrane region" description="Helical" evidence="1">
    <location>
        <begin position="165"/>
        <end position="185"/>
    </location>
</feature>
<feature type="transmembrane region" description="Helical" evidence="1">
    <location>
        <begin position="222"/>
        <end position="242"/>
    </location>
</feature>
<feature type="transmembrane region" description="Helical" evidence="1">
    <location>
        <begin position="245"/>
        <end position="262"/>
    </location>
</feature>
<feature type="transmembrane region" description="Helical" evidence="1">
    <location>
        <begin position="283"/>
        <end position="303"/>
    </location>
</feature>
<feature type="transmembrane region" description="Helical" evidence="1">
    <location>
        <begin position="375"/>
        <end position="395"/>
    </location>
</feature>
<feature type="domain" description="EamA">
    <location>
        <begin position="124"/>
        <end position="241"/>
    </location>
</feature>
<accession>Q69VR7</accession>
<accession>A0A0P0XL97</accession>
<accession>Q94JW4</accession>
<protein>
    <recommendedName>
        <fullName>Phosphoenolpyruvate/phosphate translocator 1, chloroplastic</fullName>
        <shortName>OsPPT1</shortName>
    </recommendedName>
</protein>
<gene>
    <name type="primary">PPT1</name>
    <name type="ordered locus">Os09g0297400</name>
    <name type="ordered locus">LOC_Os09g12600</name>
    <name type="ORF">OJ1381_H04.7</name>
    <name type="ORF">OsJ_28749</name>
    <name type="ORF">P0592C05.31</name>
</gene>
<dbReference type="EMBL" id="AF372833">
    <property type="protein sequence ID" value="AAK51561.1"/>
    <property type="molecule type" value="mRNA"/>
</dbReference>
<dbReference type="EMBL" id="AP004011">
    <property type="protein sequence ID" value="BAD32978.1"/>
    <property type="molecule type" value="Genomic_DNA"/>
</dbReference>
<dbReference type="EMBL" id="AP004756">
    <property type="protein sequence ID" value="BAD33217.1"/>
    <property type="molecule type" value="Genomic_DNA"/>
</dbReference>
<dbReference type="EMBL" id="AP008215">
    <property type="protein sequence ID" value="BAF24719.1"/>
    <property type="molecule type" value="Genomic_DNA"/>
</dbReference>
<dbReference type="EMBL" id="AP014965">
    <property type="protein sequence ID" value="BAT07321.1"/>
    <property type="molecule type" value="Genomic_DNA"/>
</dbReference>
<dbReference type="EMBL" id="CM000146">
    <property type="protein sequence ID" value="EAZ44123.1"/>
    <property type="molecule type" value="Genomic_DNA"/>
</dbReference>
<dbReference type="EMBL" id="AK071036">
    <property type="protein sequence ID" value="BAG92274.1"/>
    <property type="molecule type" value="mRNA"/>
</dbReference>
<dbReference type="RefSeq" id="XP_015651257.1">
    <property type="nucleotide sequence ID" value="XM_015795771.1"/>
</dbReference>
<dbReference type="SMR" id="Q69VR7"/>
<dbReference type="FunCoup" id="Q69VR7">
    <property type="interactions" value="3094"/>
</dbReference>
<dbReference type="PaxDb" id="39947-Q69VR7"/>
<dbReference type="EnsemblPlants" id="Os09t0297400-01">
    <property type="protein sequence ID" value="Os09t0297400-01"/>
    <property type="gene ID" value="Os09g0297400"/>
</dbReference>
<dbReference type="Gramene" id="Os09t0297400-01">
    <property type="protein sequence ID" value="Os09t0297400-01"/>
    <property type="gene ID" value="Os09g0297400"/>
</dbReference>
<dbReference type="KEGG" id="dosa:Os09g0297400"/>
<dbReference type="eggNOG" id="KOG1441">
    <property type="taxonomic scope" value="Eukaryota"/>
</dbReference>
<dbReference type="HOGENOM" id="CLU_019048_0_0_1"/>
<dbReference type="InParanoid" id="Q69VR7"/>
<dbReference type="OMA" id="FWYTVSS"/>
<dbReference type="OrthoDB" id="6418713at2759"/>
<dbReference type="Proteomes" id="UP000000763">
    <property type="component" value="Chromosome 9"/>
</dbReference>
<dbReference type="Proteomes" id="UP000007752">
    <property type="component" value="Chromosome 9"/>
</dbReference>
<dbReference type="Proteomes" id="UP000059680">
    <property type="component" value="Chromosome 9"/>
</dbReference>
<dbReference type="GO" id="GO:0031969">
    <property type="term" value="C:chloroplast membrane"/>
    <property type="evidence" value="ECO:0007669"/>
    <property type="project" value="UniProtKB-SubCell"/>
</dbReference>
<dbReference type="GO" id="GO:0005794">
    <property type="term" value="C:Golgi apparatus"/>
    <property type="evidence" value="ECO:0000318"/>
    <property type="project" value="GO_Central"/>
</dbReference>
<dbReference type="GO" id="GO:0015121">
    <property type="term" value="F:phosphoenolpyruvate:phosphate antiporter activity"/>
    <property type="evidence" value="ECO:0000314"/>
    <property type="project" value="UniProtKB"/>
</dbReference>
<dbReference type="GO" id="GO:0009670">
    <property type="term" value="F:triose-phosphate:phosphate antiporter activity"/>
    <property type="evidence" value="ECO:0000314"/>
    <property type="project" value="UniProtKB"/>
</dbReference>
<dbReference type="GO" id="GO:0015714">
    <property type="term" value="P:phosphoenolpyruvate transport"/>
    <property type="evidence" value="ECO:0000314"/>
    <property type="project" value="UniProtKB"/>
</dbReference>
<dbReference type="GO" id="GO:0035436">
    <property type="term" value="P:triose phosphate transmembrane transport"/>
    <property type="evidence" value="ECO:0000314"/>
    <property type="project" value="UniProtKB"/>
</dbReference>
<dbReference type="InterPro" id="IPR004853">
    <property type="entry name" value="Sugar_P_trans_dom"/>
</dbReference>
<dbReference type="InterPro" id="IPR004696">
    <property type="entry name" value="Tpt_PEP_transl"/>
</dbReference>
<dbReference type="InterPro" id="IPR050186">
    <property type="entry name" value="TPT_transporter"/>
</dbReference>
<dbReference type="NCBIfam" id="TIGR00817">
    <property type="entry name" value="tpt"/>
    <property type="match status" value="1"/>
</dbReference>
<dbReference type="PANTHER" id="PTHR11132">
    <property type="entry name" value="SOLUTE CARRIER FAMILY 35"/>
    <property type="match status" value="1"/>
</dbReference>
<dbReference type="Pfam" id="PF03151">
    <property type="entry name" value="TPT"/>
    <property type="match status" value="1"/>
</dbReference>
<dbReference type="SUPFAM" id="SSF103481">
    <property type="entry name" value="Multidrug resistance efflux transporter EmrE"/>
    <property type="match status" value="2"/>
</dbReference>
<comment type="function">
    <text evidence="2">Phosphoenolpyruvate/phosphate translocator that transports phosphoenolpyruvate (PEP) and dihydroxyacetone phosphate.</text>
</comment>
<comment type="subcellular location">
    <subcellularLocation>
        <location evidence="3">Plastid</location>
        <location evidence="3">Chloroplast membrane</location>
        <topology evidence="3">Multi-pass membrane protein</topology>
    </subcellularLocation>
</comment>
<comment type="similarity">
    <text evidence="3">Belongs to the TPT transporter family. PPT (TC 2.A.7.9) subfamily.</text>
</comment>